<name>ADT2_WHEAT</name>
<protein>
    <recommendedName>
        <fullName>ADP,ATP carrier protein 2, mitochondrial</fullName>
    </recommendedName>
    <alternativeName>
        <fullName>ADP/ATP translocase 2</fullName>
    </alternativeName>
    <alternativeName>
        <fullName>Adenine nucleotide translocator 2</fullName>
        <shortName>ANT 2</shortName>
    </alternativeName>
</protein>
<feature type="transit peptide" description="Mitochondrion">
    <location>
        <begin position="1"/>
        <end status="unknown"/>
    </location>
</feature>
<feature type="chain" id="PRO_0000019254" description="ADP,ATP carrier protein 2, mitochondrial">
    <location>
        <begin status="unknown"/>
        <end position="331"/>
    </location>
</feature>
<feature type="transmembrane region" description="Helical; Name=1" evidence="4">
    <location>
        <begin position="31"/>
        <end position="58"/>
    </location>
</feature>
<feature type="transmembrane region" description="Helical; Name=2" evidence="4">
    <location>
        <begin position="99"/>
        <end position="123"/>
    </location>
</feature>
<feature type="transmembrane region" description="Helical; Name=3" evidence="4">
    <location>
        <begin position="132"/>
        <end position="152"/>
    </location>
</feature>
<feature type="transmembrane region" description="Helical; Name=4" evidence="4">
    <location>
        <begin position="202"/>
        <end position="223"/>
    </location>
</feature>
<feature type="transmembrane region" description="Helical; Name=5" evidence="4">
    <location>
        <begin position="237"/>
        <end position="257"/>
    </location>
</feature>
<feature type="transmembrane region" description="Helical; Name=6" evidence="4">
    <location>
        <begin position="297"/>
        <end position="317"/>
    </location>
</feature>
<feature type="repeat" description="Solcar 1">
    <location>
        <begin position="29"/>
        <end position="122"/>
    </location>
</feature>
<feature type="repeat" description="Solcar 2">
    <location>
        <begin position="134"/>
        <end position="226"/>
    </location>
</feature>
<feature type="repeat" description="Solcar 3">
    <location>
        <begin position="238"/>
        <end position="320"/>
    </location>
</feature>
<feature type="region of interest" description="Important for transport activity" evidence="3">
    <location>
        <begin position="261"/>
        <end position="266"/>
    </location>
</feature>
<feature type="short sequence motif" description="Nucleotide carrier signature motif" evidence="2">
    <location>
        <begin position="261"/>
        <end position="266"/>
    </location>
</feature>
<feature type="binding site" evidence="2">
    <location>
        <position position="104"/>
    </location>
    <ligand>
        <name>ADP</name>
        <dbReference type="ChEBI" id="CHEBI:456216"/>
    </ligand>
</feature>
<feature type="binding site" evidence="2">
    <location>
        <position position="116"/>
    </location>
    <ligand>
        <name>ADP</name>
        <dbReference type="ChEBI" id="CHEBI:456216"/>
    </ligand>
</feature>
<feature type="binding site" evidence="2">
    <location>
        <position position="261"/>
    </location>
    <ligand>
        <name>ADP</name>
        <dbReference type="ChEBI" id="CHEBI:456216"/>
    </ligand>
</feature>
<evidence type="ECO:0000250" key="1">
    <source>
        <dbReference type="UniProtKB" id="G2QNH0"/>
    </source>
</evidence>
<evidence type="ECO:0000250" key="2">
    <source>
        <dbReference type="UniProtKB" id="P02722"/>
    </source>
</evidence>
<evidence type="ECO:0000250" key="3">
    <source>
        <dbReference type="UniProtKB" id="P12235"/>
    </source>
</evidence>
<evidence type="ECO:0000250" key="4">
    <source>
        <dbReference type="UniProtKB" id="P18239"/>
    </source>
</evidence>
<evidence type="ECO:0000250" key="5">
    <source>
        <dbReference type="UniProtKB" id="P31167"/>
    </source>
</evidence>
<evidence type="ECO:0000250" key="6">
    <source>
        <dbReference type="UniProtKB" id="P48962"/>
    </source>
</evidence>
<evidence type="ECO:0000255" key="7"/>
<evidence type="ECO:0000305" key="8"/>
<organism>
    <name type="scientific">Triticum aestivum</name>
    <name type="common">Wheat</name>
    <dbReference type="NCBI Taxonomy" id="4565"/>
    <lineage>
        <taxon>Eukaryota</taxon>
        <taxon>Viridiplantae</taxon>
        <taxon>Streptophyta</taxon>
        <taxon>Embryophyta</taxon>
        <taxon>Tracheophyta</taxon>
        <taxon>Spermatophyta</taxon>
        <taxon>Magnoliopsida</taxon>
        <taxon>Liliopsida</taxon>
        <taxon>Poales</taxon>
        <taxon>Poaceae</taxon>
        <taxon>BOP clade</taxon>
        <taxon>Pooideae</taxon>
        <taxon>Triticodae</taxon>
        <taxon>Triticeae</taxon>
        <taxon>Triticinae</taxon>
        <taxon>Triticum</taxon>
    </lineage>
</organism>
<proteinExistence type="inferred from homology"/>
<keyword id="KW-0050">Antiport</keyword>
<keyword id="KW-0472">Membrane</keyword>
<keyword id="KW-0496">Mitochondrion</keyword>
<keyword id="KW-0999">Mitochondrion inner membrane</keyword>
<keyword id="KW-1185">Reference proteome</keyword>
<keyword id="KW-0677">Repeat</keyword>
<keyword id="KW-0809">Transit peptide</keyword>
<keyword id="KW-0812">Transmembrane</keyword>
<keyword id="KW-1133">Transmembrane helix</keyword>
<keyword id="KW-0813">Transport</keyword>
<accession>Q41630</accession>
<sequence length="331" mass="35790">MTQNLGISVPMMSSSPLFANAPPEKKGVKNFAIDFLMGGVSAAVSKTAAAPIERVKLLIQNQDEMIKAGRLSEPYKGIGDCFGRTIKDEGFGSLWRGNTANVIRYFPTQALNFAFKDYFKRMFNFKKDKDGYWKWFGGNLASGGAAGASSLFFVYSLDYGRTRLANDAKASKGGGDRQFNGLVDVYRKTLKSDGIAGLYRGFNISCVGIIVYRGLYFGLYDSLKPVLLTGTLQVCSFASFALGWLITNGAGLASYPIDTVRRRMMMTSGEAVKYKSSLDAFQQIPAKEGAKSLFKGAGANILRAIAGAGVLSGYDQLQILFFGKKYGSGGA</sequence>
<gene>
    <name type="primary">ANT-G2</name>
</gene>
<reference key="1">
    <citation type="online journal article" date="1996" name="Plant Gene Register">
        <title>Nucleotide sequences of two genes (ANT-G1 and ANT-G2) encoding the adenine nucleotide translocator of wheat mitochondria.</title>
        <authorList>
            <person name="Iacobazzi V."/>
            <person name="Poli A."/>
            <person name="Blanco A."/>
            <person name="Palmieri F."/>
        </authorList>
        <locator>PGR96-016</locator>
    </citation>
    <scope>NUCLEOTIDE SEQUENCE [GENOMIC DNA]</scope>
    <source>
        <tissue>Leaf</tissue>
    </source>
</reference>
<comment type="function">
    <text evidence="1 6">ADP:ATP antiporter that mediates import of ADP into the mitochondrial matrix for ATP synthesis, and export of ATP out to fuel the cell (By similarity). Cycles between the cytoplasmic-open state (c-state) and the matrix-open state (m-state): operates by the alternating access mechanism with a single substrate-binding site intermittently exposed to either the cytosolic (c-state) or matrix (m-state) side of the inner mitochondrial membrane (By similarity).</text>
</comment>
<comment type="catalytic activity">
    <reaction evidence="6">
        <text>ADP(in) + ATP(out) = ADP(out) + ATP(in)</text>
        <dbReference type="Rhea" id="RHEA:34999"/>
        <dbReference type="ChEBI" id="CHEBI:30616"/>
        <dbReference type="ChEBI" id="CHEBI:456216"/>
    </reaction>
    <physiologicalReaction direction="left-to-right" evidence="6">
        <dbReference type="Rhea" id="RHEA:35000"/>
    </physiologicalReaction>
</comment>
<comment type="activity regulation">
    <text evidence="1">The matrix-open state (m-state) is inhibited by the membrane-permeable bongkrekic acid (BKA). The cytoplasmic-open state (c-state) is inhibited by the membrane-impermeable toxic inhibitor carboxyatractyloside (CATR).</text>
</comment>
<comment type="subunit">
    <text evidence="1 2">Monomer.</text>
</comment>
<comment type="subcellular location">
    <subcellularLocation>
        <location evidence="5">Mitochondrion inner membrane</location>
        <topology evidence="7">Multi-pass membrane protein</topology>
    </subcellularLocation>
</comment>
<comment type="domain">
    <text evidence="4">The transmembrane helices are not perpendicular to the plane of the membrane, but cross the membrane at an angle. At least 2 of the odd-numbered transmembrane helices exhibit a sharp kink, due to the presence of a conserved proline residue.</text>
</comment>
<comment type="similarity">
    <text evidence="8">Belongs to the mitochondrial carrier (TC 2.A.29) family.</text>
</comment>
<dbReference type="EMBL" id="X95864">
    <property type="protein sequence ID" value="CAA65120.1"/>
    <property type="molecule type" value="Genomic_DNA"/>
</dbReference>
<dbReference type="SMR" id="Q41630"/>
<dbReference type="STRING" id="4565.Q41630"/>
<dbReference type="PaxDb" id="4565-Traes_6AL_150E13EA1.1"/>
<dbReference type="eggNOG" id="KOG0749">
    <property type="taxonomic scope" value="Eukaryota"/>
</dbReference>
<dbReference type="Proteomes" id="UP000019116">
    <property type="component" value="Unplaced"/>
</dbReference>
<dbReference type="ExpressionAtlas" id="Q41630">
    <property type="expression patterns" value="baseline and differential"/>
</dbReference>
<dbReference type="GO" id="GO:0005743">
    <property type="term" value="C:mitochondrial inner membrane"/>
    <property type="evidence" value="ECO:0007669"/>
    <property type="project" value="UniProtKB-SubCell"/>
</dbReference>
<dbReference type="GO" id="GO:0005471">
    <property type="term" value="F:ATP:ADP antiporter activity"/>
    <property type="evidence" value="ECO:0000318"/>
    <property type="project" value="GO_Central"/>
</dbReference>
<dbReference type="GO" id="GO:0140021">
    <property type="term" value="P:mitochondrial ADP transmembrane transport"/>
    <property type="evidence" value="ECO:0007669"/>
    <property type="project" value="InterPro"/>
</dbReference>
<dbReference type="GO" id="GO:1990544">
    <property type="term" value="P:mitochondrial ATP transmembrane transport"/>
    <property type="evidence" value="ECO:0007669"/>
    <property type="project" value="InterPro"/>
</dbReference>
<dbReference type="FunFam" id="1.50.40.10:FF:000001">
    <property type="entry name" value="ADP,ATP carrier protein, mitochondrial"/>
    <property type="match status" value="1"/>
</dbReference>
<dbReference type="Gene3D" id="1.50.40.10">
    <property type="entry name" value="Mitochondrial carrier domain"/>
    <property type="match status" value="1"/>
</dbReference>
<dbReference type="InterPro" id="IPR002113">
    <property type="entry name" value="ADT_euk_type"/>
</dbReference>
<dbReference type="InterPro" id="IPR002067">
    <property type="entry name" value="Mit_carrier"/>
</dbReference>
<dbReference type="InterPro" id="IPR018108">
    <property type="entry name" value="Mitochondrial_sb/sol_carrier"/>
</dbReference>
<dbReference type="InterPro" id="IPR023395">
    <property type="entry name" value="Mt_carrier_dom_sf"/>
</dbReference>
<dbReference type="PANTHER" id="PTHR45635">
    <property type="entry name" value="ADP,ATP CARRIER PROTEIN 1-RELATED-RELATED"/>
    <property type="match status" value="1"/>
</dbReference>
<dbReference type="PANTHER" id="PTHR45635:SF47">
    <property type="entry name" value="ADP,ATP CARRIER PROTEIN, MITOCHONDRIAL"/>
    <property type="match status" value="1"/>
</dbReference>
<dbReference type="Pfam" id="PF00153">
    <property type="entry name" value="Mito_carr"/>
    <property type="match status" value="3"/>
</dbReference>
<dbReference type="PRINTS" id="PR00927">
    <property type="entry name" value="ADPTRNSLCASE"/>
</dbReference>
<dbReference type="PRINTS" id="PR00926">
    <property type="entry name" value="MITOCARRIER"/>
</dbReference>
<dbReference type="SUPFAM" id="SSF103506">
    <property type="entry name" value="Mitochondrial carrier"/>
    <property type="match status" value="1"/>
</dbReference>
<dbReference type="PROSITE" id="PS50920">
    <property type="entry name" value="SOLCAR"/>
    <property type="match status" value="3"/>
</dbReference>